<keyword id="KW-0025">Alternative splicing</keyword>
<keyword id="KW-0343">GTPase activation</keyword>
<keyword id="KW-1185">Reference proteome</keyword>
<name>GDI1_ARATH</name>
<comment type="function">
    <text evidence="2 3">Regulates the GDP/GTP exchange reaction of most RAB proteins by inhibiting the dissociation of GDP from them, and the subsequent binding of GTP.</text>
</comment>
<comment type="subunit">
    <text evidence="1">Interacts with the GDP-bound form of RABA5C (via C-terminus).</text>
</comment>
<comment type="alternative products">
    <event type="alternative splicing"/>
    <isoform>
        <id>Q96254-1</id>
        <name>1</name>
        <sequence type="displayed"/>
    </isoform>
    <isoform>
        <id>Q96254-2</id>
        <name>2</name>
        <sequence type="described" ref="VSP_053854 VSP_053855"/>
    </isoform>
</comment>
<comment type="tissue specificity">
    <text evidence="2 3">Expressed in roots, rosette leaves, stems, floral buds and siliques.</text>
</comment>
<comment type="similarity">
    <text evidence="5">Belongs to the Rab GDI family.</text>
</comment>
<dbReference type="EMBL" id="D83531">
    <property type="protein sequence ID" value="BAA11944.1"/>
    <property type="molecule type" value="mRNA"/>
</dbReference>
<dbReference type="EMBL" id="Y07961">
    <property type="protein sequence ID" value="CAA69258.1"/>
    <property type="molecule type" value="mRNA"/>
</dbReference>
<dbReference type="EMBL" id="AC004005">
    <property type="protein sequence ID" value="AAC23429.1"/>
    <property type="molecule type" value="Genomic_DNA"/>
</dbReference>
<dbReference type="EMBL" id="CP002685">
    <property type="protein sequence ID" value="AEC10374.1"/>
    <property type="molecule type" value="Genomic_DNA"/>
</dbReference>
<dbReference type="EMBL" id="CP002685">
    <property type="protein sequence ID" value="AEC10375.1"/>
    <property type="molecule type" value="Genomic_DNA"/>
</dbReference>
<dbReference type="EMBL" id="AF361801">
    <property type="protein sequence ID" value="AAK32814.1"/>
    <property type="molecule type" value="mRNA"/>
</dbReference>
<dbReference type="EMBL" id="AY050418">
    <property type="protein sequence ID" value="AAK91434.1"/>
    <property type="molecule type" value="mRNA"/>
</dbReference>
<dbReference type="EMBL" id="AY065087">
    <property type="protein sequence ID" value="AAL38263.1"/>
    <property type="molecule type" value="mRNA"/>
</dbReference>
<dbReference type="EMBL" id="AY113036">
    <property type="protein sequence ID" value="AAM47344.1"/>
    <property type="molecule type" value="mRNA"/>
</dbReference>
<dbReference type="EMBL" id="AK316933">
    <property type="protein sequence ID" value="BAH19638.1"/>
    <property type="molecule type" value="mRNA"/>
</dbReference>
<dbReference type="EMBL" id="AK226690">
    <property type="protein sequence ID" value="BAE98797.1"/>
    <property type="molecule type" value="mRNA"/>
</dbReference>
<dbReference type="EMBL" id="AK227643">
    <property type="protein sequence ID" value="BAE99631.1"/>
    <property type="molecule type" value="mRNA"/>
</dbReference>
<dbReference type="EMBL" id="AY086920">
    <property type="protein sequence ID" value="AAM64484.1"/>
    <property type="molecule type" value="mRNA"/>
</dbReference>
<dbReference type="PIR" id="T00690">
    <property type="entry name" value="T00690"/>
</dbReference>
<dbReference type="RefSeq" id="NP_001078054.1">
    <molecule id="Q96254-2"/>
    <property type="nucleotide sequence ID" value="NM_001084585.2"/>
</dbReference>
<dbReference type="RefSeq" id="NP_181938.1">
    <molecule id="Q96254-1"/>
    <property type="nucleotide sequence ID" value="NM_129973.3"/>
</dbReference>
<dbReference type="SMR" id="Q96254"/>
<dbReference type="BioGRID" id="4352">
    <property type="interactions" value="4"/>
</dbReference>
<dbReference type="FunCoup" id="Q96254">
    <property type="interactions" value="4500"/>
</dbReference>
<dbReference type="IntAct" id="Q96254">
    <property type="interactions" value="1"/>
</dbReference>
<dbReference type="STRING" id="3702.Q96254"/>
<dbReference type="iPTMnet" id="Q96254"/>
<dbReference type="MetOSite" id="Q96254"/>
<dbReference type="PaxDb" id="3702-AT2G44100.1"/>
<dbReference type="ProteomicsDB" id="221918">
    <molecule id="Q96254-1"/>
</dbReference>
<dbReference type="EnsemblPlants" id="AT2G44100.1">
    <molecule id="Q96254-1"/>
    <property type="protein sequence ID" value="AT2G44100.1"/>
    <property type="gene ID" value="AT2G44100"/>
</dbReference>
<dbReference type="EnsemblPlants" id="AT2G44100.2">
    <molecule id="Q96254-2"/>
    <property type="protein sequence ID" value="AT2G44100.2"/>
    <property type="gene ID" value="AT2G44100"/>
</dbReference>
<dbReference type="GeneID" id="819016"/>
<dbReference type="Gramene" id="AT2G44100.1">
    <molecule id="Q96254-1"/>
    <property type="protein sequence ID" value="AT2G44100.1"/>
    <property type="gene ID" value="AT2G44100"/>
</dbReference>
<dbReference type="Gramene" id="AT2G44100.2">
    <molecule id="Q96254-2"/>
    <property type="protein sequence ID" value="AT2G44100.2"/>
    <property type="gene ID" value="AT2G44100"/>
</dbReference>
<dbReference type="KEGG" id="ath:AT2G44100"/>
<dbReference type="Araport" id="AT2G44100"/>
<dbReference type="TAIR" id="AT2G44100">
    <property type="gene designation" value="GDI1"/>
</dbReference>
<dbReference type="eggNOG" id="KOG1439">
    <property type="taxonomic scope" value="Eukaryota"/>
</dbReference>
<dbReference type="InParanoid" id="Q96254"/>
<dbReference type="OMA" id="FETKAKM"/>
<dbReference type="OrthoDB" id="9446342at2759"/>
<dbReference type="PhylomeDB" id="Q96254"/>
<dbReference type="PRO" id="PR:Q96254"/>
<dbReference type="Proteomes" id="UP000006548">
    <property type="component" value="Chromosome 2"/>
</dbReference>
<dbReference type="ExpressionAtlas" id="Q96254">
    <property type="expression patterns" value="baseline and differential"/>
</dbReference>
<dbReference type="GO" id="GO:0005829">
    <property type="term" value="C:cytosol"/>
    <property type="evidence" value="ECO:0007005"/>
    <property type="project" value="TAIR"/>
</dbReference>
<dbReference type="GO" id="GO:0005096">
    <property type="term" value="F:GTPase activator activity"/>
    <property type="evidence" value="ECO:0007669"/>
    <property type="project" value="UniProtKB-KW"/>
</dbReference>
<dbReference type="GO" id="GO:0005093">
    <property type="term" value="F:Rab GDP-dissociation inhibitor activity"/>
    <property type="evidence" value="ECO:0007669"/>
    <property type="project" value="InterPro"/>
</dbReference>
<dbReference type="GO" id="GO:0015031">
    <property type="term" value="P:protein transport"/>
    <property type="evidence" value="ECO:0007669"/>
    <property type="project" value="InterPro"/>
</dbReference>
<dbReference type="GO" id="GO:0007264">
    <property type="term" value="P:small GTPase-mediated signal transduction"/>
    <property type="evidence" value="ECO:0007669"/>
    <property type="project" value="InterPro"/>
</dbReference>
<dbReference type="FunFam" id="1.10.405.10:FF:000002">
    <property type="entry name" value="Guanosine nucleotide diphosphate dissociation inhibitor"/>
    <property type="match status" value="1"/>
</dbReference>
<dbReference type="FunFam" id="3.30.519.10:FF:000015">
    <property type="entry name" value="Guanosine nucleotide diphosphate dissociation inhibitor"/>
    <property type="match status" value="1"/>
</dbReference>
<dbReference type="FunFam" id="3.50.50.60:FF:000587">
    <property type="entry name" value="Guanosine nucleotide diphosphate dissociation inhibitor"/>
    <property type="match status" value="1"/>
</dbReference>
<dbReference type="Gene3D" id="3.50.50.60">
    <property type="entry name" value="FAD/NAD(P)-binding domain"/>
    <property type="match status" value="1"/>
</dbReference>
<dbReference type="Gene3D" id="1.10.405.10">
    <property type="entry name" value="Guanine Nucleotide Dissociation Inhibitor, domain 1"/>
    <property type="match status" value="1"/>
</dbReference>
<dbReference type="Gene3D" id="3.30.519.10">
    <property type="entry name" value="Guanine Nucleotide Dissociation Inhibitor, domain 2"/>
    <property type="match status" value="1"/>
</dbReference>
<dbReference type="InterPro" id="IPR036188">
    <property type="entry name" value="FAD/NAD-bd_sf"/>
</dbReference>
<dbReference type="InterPro" id="IPR018203">
    <property type="entry name" value="GDP_dissociation_inhibitor"/>
</dbReference>
<dbReference type="InterPro" id="IPR000806">
    <property type="entry name" value="RabGDI"/>
</dbReference>
<dbReference type="PANTHER" id="PTHR11787:SF8">
    <property type="entry name" value="RAB GDP DISSOCIATION INHIBITOR"/>
    <property type="match status" value="1"/>
</dbReference>
<dbReference type="PANTHER" id="PTHR11787">
    <property type="entry name" value="RAB GDP-DISSOCIATION INHIBITOR"/>
    <property type="match status" value="1"/>
</dbReference>
<dbReference type="Pfam" id="PF00996">
    <property type="entry name" value="GDI"/>
    <property type="match status" value="1"/>
</dbReference>
<dbReference type="PRINTS" id="PR00892">
    <property type="entry name" value="RABGDI"/>
</dbReference>
<dbReference type="PRINTS" id="PR00891">
    <property type="entry name" value="RABGDIREP"/>
</dbReference>
<dbReference type="SUPFAM" id="SSF51905">
    <property type="entry name" value="FAD/NAD(P)-binding domain"/>
    <property type="match status" value="2"/>
</dbReference>
<organism>
    <name type="scientific">Arabidopsis thaliana</name>
    <name type="common">Mouse-ear cress</name>
    <dbReference type="NCBI Taxonomy" id="3702"/>
    <lineage>
        <taxon>Eukaryota</taxon>
        <taxon>Viridiplantae</taxon>
        <taxon>Streptophyta</taxon>
        <taxon>Embryophyta</taxon>
        <taxon>Tracheophyta</taxon>
        <taxon>Spermatophyta</taxon>
        <taxon>Magnoliopsida</taxon>
        <taxon>eudicotyledons</taxon>
        <taxon>Gunneridae</taxon>
        <taxon>Pentapetalae</taxon>
        <taxon>rosids</taxon>
        <taxon>malvids</taxon>
        <taxon>Brassicales</taxon>
        <taxon>Brassicaceae</taxon>
        <taxon>Camelineae</taxon>
        <taxon>Arabidopsis</taxon>
    </lineage>
</organism>
<proteinExistence type="evidence at protein level"/>
<feature type="chain" id="PRO_0000425807" description="Guanosine nucleotide diphosphate dissociation inhibitor 1">
    <location>
        <begin position="1"/>
        <end position="445"/>
    </location>
</feature>
<feature type="splice variant" id="VSP_053854" description="In isoform 2." evidence="4">
    <original>ELD</original>
    <variation>VMF</variation>
    <location>
        <begin position="429"/>
        <end position="431"/>
    </location>
</feature>
<feature type="splice variant" id="VSP_053855" description="In isoform 2." evidence="4">
    <location>
        <begin position="432"/>
        <end position="445"/>
    </location>
</feature>
<feature type="sequence conflict" description="In Ref. 5; AAL38263." evidence="5" ref="5">
    <original>E</original>
    <variation>K</variation>
    <location>
        <position position="233"/>
    </location>
</feature>
<feature type="sequence conflict" description="In Ref. 8; AAM64484." evidence="5" ref="8">
    <original>C</original>
    <variation>F</variation>
    <location>
        <position position="338"/>
    </location>
</feature>
<feature type="sequence conflict" description="In Ref. 5; AAL38263." evidence="5" ref="5">
    <original>L</original>
    <variation>P</variation>
    <location>
        <position position="430"/>
    </location>
</feature>
<feature type="sequence conflict" description="In Ref. 2; CAA69258." evidence="5" ref="2">
    <original>A</original>
    <variation>P</variation>
    <location>
        <position position="438"/>
    </location>
</feature>
<evidence type="ECO:0000269" key="1">
    <source>
    </source>
</evidence>
<evidence type="ECO:0000269" key="2">
    <source>
    </source>
</evidence>
<evidence type="ECO:0000269" key="3">
    <source>
    </source>
</evidence>
<evidence type="ECO:0000303" key="4">
    <source>
    </source>
</evidence>
<evidence type="ECO:0000305" key="5"/>
<protein>
    <recommendedName>
        <fullName>Guanosine nucleotide diphosphate dissociation inhibitor 1</fullName>
        <shortName>AtGDI1</shortName>
    </recommendedName>
</protein>
<accession>Q96254</accession>
<accession>B9DFX1</accession>
<accession>Q8LBY8</accession>
<accession>Q8VZB4</accession>
<accession>Q96284</accession>
<sequence>MDEEYEVIVLGTGLKECILSGLLSVDGLKVLHMDRNDYYGGESTSLNLNQLWKKFRGEEKAPAHLGSSRDYNVDMMPKFMMANGKLVRVLIHTDVTKYLSFKAVDGSYVFVQGKVQKVPATPMEALKSPLMGIFEKRRAGKFFSYVQEYDEKDPKTHDGMDLRRVTTKDLIAKFGLKEDTIDFIGHAVALHCNDNHLHQPAYDTVMRMKLYAESLARFQGGSPYIYPLYGLGELPQAFARLSAVYGGTYMLNKPECKVEFDEEGKVSGVTSEGETAKCKKVVCDPSYLTNKVRKIGRVARAIAIMSHPIPNTNDSQSVQVILPQKQLGRKSDMYVFCCSYSHNVAPKGKFIAFVSTDAETDNPQTELQPGIDLLGPVDELFFDIYDRYEPVNEPTLDNCFISTSYDATTHFDTTVVDVLNMYKLITGKELDLSVDLNAASAAEEE</sequence>
<reference key="1">
    <citation type="journal article" date="1996" name="Plant Cell">
        <title>An Arabidopsis gene isolated by a novel method for detecting genetic interaction in yeast encodes the GDP dissociation inhibitor of Ara4 GTPase.</title>
        <authorList>
            <person name="Ueda T."/>
            <person name="Matsuda N."/>
            <person name="Anai T."/>
            <person name="Tsukaya H."/>
            <person name="Uchimiya H."/>
            <person name="Nakano A."/>
        </authorList>
    </citation>
    <scope>NUCLEOTIDE SEQUENCE [MRNA]</scope>
    <scope>FUNCTION</scope>
    <scope>TISSUE SPECIFICITY</scope>
</reference>
<reference key="2">
    <citation type="journal article" date="1997" name="FEBS Lett.">
        <title>At-GDI1 from Arabidopsis thaliana encodes a rab-specific GDP dissociation inhibitor that complements the sec19 mutation of Saccharomyces cerevisiae.</title>
        <authorList>
            <person name="Zarsky V."/>
            <person name="Cvrckova F."/>
            <person name="Bischoff F."/>
            <person name="Palme K."/>
        </authorList>
    </citation>
    <scope>NUCLEOTIDE SEQUENCE [MRNA]</scope>
    <scope>FUNCTION</scope>
    <scope>TISSUE SPECIFICITY</scope>
    <source>
        <strain>cv. Columbia</strain>
    </source>
</reference>
<reference key="3">
    <citation type="journal article" date="1999" name="Nature">
        <title>Sequence and analysis of chromosome 2 of the plant Arabidopsis thaliana.</title>
        <authorList>
            <person name="Lin X."/>
            <person name="Kaul S."/>
            <person name="Rounsley S.D."/>
            <person name="Shea T.P."/>
            <person name="Benito M.-I."/>
            <person name="Town C.D."/>
            <person name="Fujii C.Y."/>
            <person name="Mason T.M."/>
            <person name="Bowman C.L."/>
            <person name="Barnstead M.E."/>
            <person name="Feldblyum T.V."/>
            <person name="Buell C.R."/>
            <person name="Ketchum K.A."/>
            <person name="Lee J.J."/>
            <person name="Ronning C.M."/>
            <person name="Koo H.L."/>
            <person name="Moffat K.S."/>
            <person name="Cronin L.A."/>
            <person name="Shen M."/>
            <person name="Pai G."/>
            <person name="Van Aken S."/>
            <person name="Umayam L."/>
            <person name="Tallon L.J."/>
            <person name="Gill J.E."/>
            <person name="Adams M.D."/>
            <person name="Carrera A.J."/>
            <person name="Creasy T.H."/>
            <person name="Goodman H.M."/>
            <person name="Somerville C.R."/>
            <person name="Copenhaver G.P."/>
            <person name="Preuss D."/>
            <person name="Nierman W.C."/>
            <person name="White O."/>
            <person name="Eisen J.A."/>
            <person name="Salzberg S.L."/>
            <person name="Fraser C.M."/>
            <person name="Venter J.C."/>
        </authorList>
    </citation>
    <scope>NUCLEOTIDE SEQUENCE [LARGE SCALE GENOMIC DNA]</scope>
    <source>
        <strain>cv. Columbia</strain>
    </source>
</reference>
<reference key="4">
    <citation type="journal article" date="2017" name="Plant J.">
        <title>Araport11: a complete reannotation of the Arabidopsis thaliana reference genome.</title>
        <authorList>
            <person name="Cheng C.Y."/>
            <person name="Krishnakumar V."/>
            <person name="Chan A.P."/>
            <person name="Thibaud-Nissen F."/>
            <person name="Schobel S."/>
            <person name="Town C.D."/>
        </authorList>
    </citation>
    <scope>GENOME REANNOTATION</scope>
    <source>
        <strain>cv. Columbia</strain>
    </source>
</reference>
<reference key="5">
    <citation type="journal article" date="2003" name="Science">
        <title>Empirical analysis of transcriptional activity in the Arabidopsis genome.</title>
        <authorList>
            <person name="Yamada K."/>
            <person name="Lim J."/>
            <person name="Dale J.M."/>
            <person name="Chen H."/>
            <person name="Shinn P."/>
            <person name="Palm C.J."/>
            <person name="Southwick A.M."/>
            <person name="Wu H.C."/>
            <person name="Kim C.J."/>
            <person name="Nguyen M."/>
            <person name="Pham P.K."/>
            <person name="Cheuk R.F."/>
            <person name="Karlin-Newmann G."/>
            <person name="Liu S.X."/>
            <person name="Lam B."/>
            <person name="Sakano H."/>
            <person name="Wu T."/>
            <person name="Yu G."/>
            <person name="Miranda M."/>
            <person name="Quach H.L."/>
            <person name="Tripp M."/>
            <person name="Chang C.H."/>
            <person name="Lee J.M."/>
            <person name="Toriumi M.J."/>
            <person name="Chan M.M."/>
            <person name="Tang C.C."/>
            <person name="Onodera C.S."/>
            <person name="Deng J.M."/>
            <person name="Akiyama K."/>
            <person name="Ansari Y."/>
            <person name="Arakawa T."/>
            <person name="Banh J."/>
            <person name="Banno F."/>
            <person name="Bowser L."/>
            <person name="Brooks S.Y."/>
            <person name="Carninci P."/>
            <person name="Chao Q."/>
            <person name="Choy N."/>
            <person name="Enju A."/>
            <person name="Goldsmith A.D."/>
            <person name="Gurjal M."/>
            <person name="Hansen N.F."/>
            <person name="Hayashizaki Y."/>
            <person name="Johnson-Hopson C."/>
            <person name="Hsuan V.W."/>
            <person name="Iida K."/>
            <person name="Karnes M."/>
            <person name="Khan S."/>
            <person name="Koesema E."/>
            <person name="Ishida J."/>
            <person name="Jiang P.X."/>
            <person name="Jones T."/>
            <person name="Kawai J."/>
            <person name="Kamiya A."/>
            <person name="Meyers C."/>
            <person name="Nakajima M."/>
            <person name="Narusaka M."/>
            <person name="Seki M."/>
            <person name="Sakurai T."/>
            <person name="Satou M."/>
            <person name="Tamse R."/>
            <person name="Vaysberg M."/>
            <person name="Wallender E.K."/>
            <person name="Wong C."/>
            <person name="Yamamura Y."/>
            <person name="Yuan S."/>
            <person name="Shinozaki K."/>
            <person name="Davis R.W."/>
            <person name="Theologis A."/>
            <person name="Ecker J.R."/>
        </authorList>
    </citation>
    <scope>NUCLEOTIDE SEQUENCE [LARGE SCALE MRNA] (ISOFORM 1)</scope>
    <source>
        <strain>cv. Columbia</strain>
    </source>
</reference>
<reference key="6">
    <citation type="journal article" date="2009" name="DNA Res.">
        <title>Analysis of multiple occurrences of alternative splicing events in Arabidopsis thaliana using novel sequenced full-length cDNAs.</title>
        <authorList>
            <person name="Iida K."/>
            <person name="Fukami-Kobayashi K."/>
            <person name="Toyoda A."/>
            <person name="Sakaki Y."/>
            <person name="Kobayashi M."/>
            <person name="Seki M."/>
            <person name="Shinozaki K."/>
        </authorList>
    </citation>
    <scope>NUCLEOTIDE SEQUENCE [LARGE SCALE MRNA] (ISOFORM 2)</scope>
    <source>
        <strain>cv. Columbia</strain>
    </source>
</reference>
<reference key="7">
    <citation type="submission" date="2006-07" db="EMBL/GenBank/DDBJ databases">
        <title>Large-scale analysis of RIKEN Arabidopsis full-length (RAFL) cDNAs.</title>
        <authorList>
            <person name="Totoki Y."/>
            <person name="Seki M."/>
            <person name="Ishida J."/>
            <person name="Nakajima M."/>
            <person name="Enju A."/>
            <person name="Kamiya A."/>
            <person name="Narusaka M."/>
            <person name="Shin-i T."/>
            <person name="Nakagawa M."/>
            <person name="Sakamoto N."/>
            <person name="Oishi K."/>
            <person name="Kohara Y."/>
            <person name="Kobayashi M."/>
            <person name="Toyoda A."/>
            <person name="Sakaki Y."/>
            <person name="Sakurai T."/>
            <person name="Iida K."/>
            <person name="Akiyama K."/>
            <person name="Satou M."/>
            <person name="Toyoda T."/>
            <person name="Konagaya A."/>
            <person name="Carninci P."/>
            <person name="Kawai J."/>
            <person name="Hayashizaki Y."/>
            <person name="Shinozaki K."/>
        </authorList>
    </citation>
    <scope>NUCLEOTIDE SEQUENCE [LARGE SCALE MRNA] (ISOFORM 1)</scope>
    <source>
        <strain>cv. Columbia</strain>
    </source>
</reference>
<reference key="8">
    <citation type="submission" date="2002-03" db="EMBL/GenBank/DDBJ databases">
        <title>Full-length cDNA from Arabidopsis thaliana.</title>
        <authorList>
            <person name="Brover V.V."/>
            <person name="Troukhan M.E."/>
            <person name="Alexandrov N.A."/>
            <person name="Lu Y.-P."/>
            <person name="Flavell R.B."/>
            <person name="Feldmann K.A."/>
        </authorList>
    </citation>
    <scope>NUCLEOTIDE SEQUENCE [LARGE SCALE MRNA]</scope>
</reference>
<reference key="9">
    <citation type="journal article" date="2000" name="Plant J.">
        <title>Modes of interaction between the Arabidopsis Rab protein, Ara4, and its putative regulator molecules revealed by a yeast expression system.</title>
        <authorList>
            <person name="Ueda T."/>
            <person name="Matsuda N."/>
            <person name="Uchimiya H."/>
            <person name="Nakano A."/>
        </authorList>
    </citation>
    <scope>INTERACTION WITH RABA5C</scope>
</reference>
<gene>
    <name type="primary">GDI1</name>
    <name type="ordered locus">At2g44100</name>
    <name type="ORF">F6E13.23</name>
</gene>